<dbReference type="EC" id="2.3.1.-" evidence="1"/>
<dbReference type="EMBL" id="CP001215">
    <property type="protein sequence ID" value="ACP14725.1"/>
    <property type="molecule type" value="Genomic_DNA"/>
</dbReference>
<dbReference type="RefSeq" id="WP_000506700.1">
    <property type="nucleotide sequence ID" value="NC_012581.1"/>
</dbReference>
<dbReference type="SMR" id="C3L6F0"/>
<dbReference type="KEGG" id="bah:BAMEG_0567"/>
<dbReference type="HOGENOM" id="CLU_136634_0_0_9"/>
<dbReference type="GO" id="GO:0016747">
    <property type="term" value="F:acyltransferase activity, transferring groups other than amino-acyl groups"/>
    <property type="evidence" value="ECO:0007669"/>
    <property type="project" value="UniProtKB-UniRule"/>
</dbReference>
<dbReference type="CDD" id="cd04301">
    <property type="entry name" value="NAT_SF"/>
    <property type="match status" value="1"/>
</dbReference>
<dbReference type="Gene3D" id="3.40.630.30">
    <property type="match status" value="1"/>
</dbReference>
<dbReference type="HAMAP" id="MF_00824">
    <property type="entry name" value="Acetyltransf_YlbP"/>
    <property type="match status" value="1"/>
</dbReference>
<dbReference type="InterPro" id="IPR016181">
    <property type="entry name" value="Acyl_CoA_acyltransferase"/>
</dbReference>
<dbReference type="InterPro" id="IPR000182">
    <property type="entry name" value="GNAT_dom"/>
</dbReference>
<dbReference type="InterPro" id="IPR017274">
    <property type="entry name" value="YlbP"/>
</dbReference>
<dbReference type="NCBIfam" id="NF010241">
    <property type="entry name" value="PRK13688.1"/>
    <property type="match status" value="1"/>
</dbReference>
<dbReference type="Pfam" id="PF00583">
    <property type="entry name" value="Acetyltransf_1"/>
    <property type="match status" value="1"/>
</dbReference>
<dbReference type="PIRSF" id="PIRSF037732">
    <property type="entry name" value="YlbP_prd"/>
    <property type="match status" value="1"/>
</dbReference>
<dbReference type="SUPFAM" id="SSF55729">
    <property type="entry name" value="Acyl-CoA N-acyltransferases (Nat)"/>
    <property type="match status" value="1"/>
</dbReference>
<gene>
    <name type="ordered locus">BAMEG_0567</name>
</gene>
<sequence length="157" mass="17938">MGFPKVERLLINYKTLDEFKKFKGCGAQELSMLEELQANIIENDSESPFYGIYYGGSLIARMSLYMKRNGGEPFEITGTYLELYKLEVLPNFQKQGFGEMLVNYAKGLQFPIKTIARIHSAGFWDKLNFQPVSVPDGDFYVWHPETNLNAVTNEESA</sequence>
<proteinExistence type="inferred from homology"/>
<organism>
    <name type="scientific">Bacillus anthracis (strain CDC 684 / NRRL 3495)</name>
    <dbReference type="NCBI Taxonomy" id="568206"/>
    <lineage>
        <taxon>Bacteria</taxon>
        <taxon>Bacillati</taxon>
        <taxon>Bacillota</taxon>
        <taxon>Bacilli</taxon>
        <taxon>Bacillales</taxon>
        <taxon>Bacillaceae</taxon>
        <taxon>Bacillus</taxon>
        <taxon>Bacillus cereus group</taxon>
    </lineage>
</organism>
<protein>
    <recommendedName>
        <fullName evidence="1">Uncharacterized N-acetyltransferase BAMEG_0567</fullName>
        <ecNumber evidence="1">2.3.1.-</ecNumber>
    </recommendedName>
</protein>
<evidence type="ECO:0000255" key="1">
    <source>
        <dbReference type="HAMAP-Rule" id="MF_00824"/>
    </source>
</evidence>
<reference key="1">
    <citation type="submission" date="2008-10" db="EMBL/GenBank/DDBJ databases">
        <title>Genome sequence of Bacillus anthracis str. CDC 684.</title>
        <authorList>
            <person name="Dodson R.J."/>
            <person name="Munk A.C."/>
            <person name="Brettin T."/>
            <person name="Bruce D."/>
            <person name="Detter C."/>
            <person name="Tapia R."/>
            <person name="Han C."/>
            <person name="Sutton G."/>
            <person name="Sims D."/>
        </authorList>
    </citation>
    <scope>NUCLEOTIDE SEQUENCE [LARGE SCALE GENOMIC DNA]</scope>
    <source>
        <strain>CDC 684 / NRRL 3495</strain>
    </source>
</reference>
<keyword id="KW-0012">Acyltransferase</keyword>
<keyword id="KW-0808">Transferase</keyword>
<name>Y567_BACAC</name>
<accession>C3L6F0</accession>
<feature type="chain" id="PRO_1000148762" description="Uncharacterized N-acetyltransferase BAMEG_0567">
    <location>
        <begin position="1"/>
        <end position="157"/>
    </location>
</feature>
<feature type="domain" description="N-acetyltransferase" evidence="1">
    <location>
        <begin position="9"/>
        <end position="146"/>
    </location>
</feature>